<organism>
    <name type="scientific">Clostridium kluyveri (strain ATCC 8527 / DSM 555 / NBRC 12016 / NCIMB 10680 / K1)</name>
    <dbReference type="NCBI Taxonomy" id="431943"/>
    <lineage>
        <taxon>Bacteria</taxon>
        <taxon>Bacillati</taxon>
        <taxon>Bacillota</taxon>
        <taxon>Clostridia</taxon>
        <taxon>Eubacteriales</taxon>
        <taxon>Clostridiaceae</taxon>
        <taxon>Clostridium</taxon>
    </lineage>
</organism>
<proteinExistence type="inferred from homology"/>
<evidence type="ECO:0000255" key="1">
    <source>
        <dbReference type="HAMAP-Rule" id="MF_01815"/>
    </source>
</evidence>
<gene>
    <name evidence="1" type="primary">fabH</name>
    <name type="ordered locus">CKL_0102</name>
</gene>
<reference key="1">
    <citation type="journal article" date="2008" name="Proc. Natl. Acad. Sci. U.S.A.">
        <title>The genome of Clostridium kluyveri, a strict anaerobe with unique metabolic features.</title>
        <authorList>
            <person name="Seedorf H."/>
            <person name="Fricke W.F."/>
            <person name="Veith B."/>
            <person name="Brueggemann H."/>
            <person name="Liesegang H."/>
            <person name="Strittmatter A."/>
            <person name="Miethke M."/>
            <person name="Buckel W."/>
            <person name="Hinderberger J."/>
            <person name="Li F."/>
            <person name="Hagemeier C."/>
            <person name="Thauer R.K."/>
            <person name="Gottschalk G."/>
        </authorList>
    </citation>
    <scope>NUCLEOTIDE SEQUENCE [LARGE SCALE GENOMIC DNA]</scope>
    <source>
        <strain>ATCC 8527 / DSM 555 / NBRC 12016 / NCIMB 10680 / K1</strain>
    </source>
</reference>
<sequence>MNKVEIAGLGSYVPPKILDNNDLSLIVDTNDEWIRCRTGIRQRRISQGENTSEMATKAAINAMKSANIKAEDIDLIVVATITPDNFIPSTACIVQKNIKAVNATCFDISAACSGLIYGLDIGTQFIRSGRFKVVLAIGAETLSKILNWQDRSTCILFGDGAAAAILQMGEEESILSMYTGSDGFQGDALTCPAVPVNNPCTTSDFQKSVVTMDGKAIFKFAVKILVKSVKMLLKEQEVTLEEIKYIIPHQANYRIIECAAKILKVDIDKFYINLDLYGNTSAASVGIALDEVYKKNLVEKGDKVLIIGFGGGLTYGGLLINVI</sequence>
<name>FABH_CLOK5</name>
<accession>A5N4E1</accession>
<protein>
    <recommendedName>
        <fullName evidence="1">Beta-ketoacyl-[acyl-carrier-protein] synthase III</fullName>
        <shortName evidence="1">Beta-ketoacyl-ACP synthase III</shortName>
        <shortName evidence="1">KAS III</shortName>
        <ecNumber evidence="1">2.3.1.180</ecNumber>
    </recommendedName>
    <alternativeName>
        <fullName evidence="1">3-oxoacyl-[acyl-carrier-protein] synthase 3</fullName>
    </alternativeName>
    <alternativeName>
        <fullName evidence="1">3-oxoacyl-[acyl-carrier-protein] synthase III</fullName>
    </alternativeName>
</protein>
<keyword id="KW-0012">Acyltransferase</keyword>
<keyword id="KW-0963">Cytoplasm</keyword>
<keyword id="KW-0275">Fatty acid biosynthesis</keyword>
<keyword id="KW-0276">Fatty acid metabolism</keyword>
<keyword id="KW-0444">Lipid biosynthesis</keyword>
<keyword id="KW-0443">Lipid metabolism</keyword>
<keyword id="KW-0511">Multifunctional enzyme</keyword>
<keyword id="KW-1185">Reference proteome</keyword>
<keyword id="KW-0808">Transferase</keyword>
<feature type="chain" id="PRO_1000088307" description="Beta-ketoacyl-[acyl-carrier-protein] synthase III">
    <location>
        <begin position="1"/>
        <end position="323"/>
    </location>
</feature>
<feature type="region of interest" description="ACP-binding" evidence="1">
    <location>
        <begin position="250"/>
        <end position="254"/>
    </location>
</feature>
<feature type="active site" evidence="1">
    <location>
        <position position="112"/>
    </location>
</feature>
<feature type="active site" evidence="1">
    <location>
        <position position="249"/>
    </location>
</feature>
<feature type="active site" evidence="1">
    <location>
        <position position="279"/>
    </location>
</feature>
<dbReference type="EC" id="2.3.1.180" evidence="1"/>
<dbReference type="EMBL" id="CP000673">
    <property type="protein sequence ID" value="EDK32172.1"/>
    <property type="molecule type" value="Genomic_DNA"/>
</dbReference>
<dbReference type="RefSeq" id="WP_011988698.1">
    <property type="nucleotide sequence ID" value="NC_009706.1"/>
</dbReference>
<dbReference type="SMR" id="A5N4E1"/>
<dbReference type="STRING" id="431943.CKL_0102"/>
<dbReference type="KEGG" id="ckl:CKL_0102"/>
<dbReference type="eggNOG" id="COG0332">
    <property type="taxonomic scope" value="Bacteria"/>
</dbReference>
<dbReference type="HOGENOM" id="CLU_039592_3_1_9"/>
<dbReference type="UniPathway" id="UPA00094"/>
<dbReference type="Proteomes" id="UP000002411">
    <property type="component" value="Chromosome"/>
</dbReference>
<dbReference type="GO" id="GO:0005737">
    <property type="term" value="C:cytoplasm"/>
    <property type="evidence" value="ECO:0007669"/>
    <property type="project" value="UniProtKB-SubCell"/>
</dbReference>
<dbReference type="GO" id="GO:0004315">
    <property type="term" value="F:3-oxoacyl-[acyl-carrier-protein] synthase activity"/>
    <property type="evidence" value="ECO:0007669"/>
    <property type="project" value="InterPro"/>
</dbReference>
<dbReference type="GO" id="GO:0033818">
    <property type="term" value="F:beta-ketoacyl-acyl-carrier-protein synthase III activity"/>
    <property type="evidence" value="ECO:0007669"/>
    <property type="project" value="UniProtKB-UniRule"/>
</dbReference>
<dbReference type="GO" id="GO:0006633">
    <property type="term" value="P:fatty acid biosynthetic process"/>
    <property type="evidence" value="ECO:0007669"/>
    <property type="project" value="UniProtKB-UniRule"/>
</dbReference>
<dbReference type="GO" id="GO:0044550">
    <property type="term" value="P:secondary metabolite biosynthetic process"/>
    <property type="evidence" value="ECO:0007669"/>
    <property type="project" value="TreeGrafter"/>
</dbReference>
<dbReference type="CDD" id="cd00830">
    <property type="entry name" value="KAS_III"/>
    <property type="match status" value="1"/>
</dbReference>
<dbReference type="FunFam" id="3.40.47.10:FF:000004">
    <property type="entry name" value="3-oxoacyl-[acyl-carrier-protein] synthase 3"/>
    <property type="match status" value="1"/>
</dbReference>
<dbReference type="Gene3D" id="3.40.47.10">
    <property type="match status" value="1"/>
</dbReference>
<dbReference type="HAMAP" id="MF_01815">
    <property type="entry name" value="FabH"/>
    <property type="match status" value="1"/>
</dbReference>
<dbReference type="InterPro" id="IPR013747">
    <property type="entry name" value="ACP_syn_III_C"/>
</dbReference>
<dbReference type="InterPro" id="IPR013751">
    <property type="entry name" value="ACP_syn_III_N"/>
</dbReference>
<dbReference type="InterPro" id="IPR004655">
    <property type="entry name" value="FabH"/>
</dbReference>
<dbReference type="InterPro" id="IPR016039">
    <property type="entry name" value="Thiolase-like"/>
</dbReference>
<dbReference type="NCBIfam" id="TIGR00747">
    <property type="entry name" value="fabH"/>
    <property type="match status" value="1"/>
</dbReference>
<dbReference type="NCBIfam" id="NF006829">
    <property type="entry name" value="PRK09352.1"/>
    <property type="match status" value="1"/>
</dbReference>
<dbReference type="PANTHER" id="PTHR34069">
    <property type="entry name" value="3-OXOACYL-[ACYL-CARRIER-PROTEIN] SYNTHASE 3"/>
    <property type="match status" value="1"/>
</dbReference>
<dbReference type="PANTHER" id="PTHR34069:SF2">
    <property type="entry name" value="BETA-KETOACYL-[ACYL-CARRIER-PROTEIN] SYNTHASE III"/>
    <property type="match status" value="1"/>
</dbReference>
<dbReference type="Pfam" id="PF08545">
    <property type="entry name" value="ACP_syn_III"/>
    <property type="match status" value="1"/>
</dbReference>
<dbReference type="Pfam" id="PF08541">
    <property type="entry name" value="ACP_syn_III_C"/>
    <property type="match status" value="1"/>
</dbReference>
<dbReference type="SUPFAM" id="SSF53901">
    <property type="entry name" value="Thiolase-like"/>
    <property type="match status" value="1"/>
</dbReference>
<comment type="function">
    <text evidence="1">Catalyzes the condensation reaction of fatty acid synthesis by the addition to an acyl acceptor of two carbons from malonyl-ACP. Catalyzes the first condensation reaction which initiates fatty acid synthesis and may therefore play a role in governing the total rate of fatty acid production. Possesses both acetoacetyl-ACP synthase and acetyl transacylase activities. Its substrate specificity determines the biosynthesis of branched-chain and/or straight-chain of fatty acids.</text>
</comment>
<comment type="catalytic activity">
    <reaction evidence="1">
        <text>malonyl-[ACP] + acetyl-CoA + H(+) = 3-oxobutanoyl-[ACP] + CO2 + CoA</text>
        <dbReference type="Rhea" id="RHEA:12080"/>
        <dbReference type="Rhea" id="RHEA-COMP:9623"/>
        <dbReference type="Rhea" id="RHEA-COMP:9625"/>
        <dbReference type="ChEBI" id="CHEBI:15378"/>
        <dbReference type="ChEBI" id="CHEBI:16526"/>
        <dbReference type="ChEBI" id="CHEBI:57287"/>
        <dbReference type="ChEBI" id="CHEBI:57288"/>
        <dbReference type="ChEBI" id="CHEBI:78449"/>
        <dbReference type="ChEBI" id="CHEBI:78450"/>
        <dbReference type="EC" id="2.3.1.180"/>
    </reaction>
</comment>
<comment type="pathway">
    <text evidence="1">Lipid metabolism; fatty acid biosynthesis.</text>
</comment>
<comment type="subunit">
    <text evidence="1">Homodimer.</text>
</comment>
<comment type="subcellular location">
    <subcellularLocation>
        <location evidence="1">Cytoplasm</location>
    </subcellularLocation>
</comment>
<comment type="domain">
    <text evidence="1">The last Arg residue of the ACP-binding site is essential for the weak association between ACP/AcpP and FabH.</text>
</comment>
<comment type="similarity">
    <text evidence="1">Belongs to the thiolase-like superfamily. FabH family.</text>
</comment>